<reference key="1">
    <citation type="journal article" date="1996" name="Nature">
        <title>Molecular characterization of an enzyme that degrades neuromodulatory fatty-acid amides.</title>
        <authorList>
            <person name="Cravatt B.F."/>
            <person name="Giang D.K."/>
            <person name="Mayfield S.P."/>
            <person name="Boger D.L."/>
            <person name="Lerner R.A."/>
            <person name="Gilula N.B."/>
        </authorList>
    </citation>
    <scope>NUCLEOTIDE SEQUENCE [MRNA]</scope>
    <scope>PARTIAL PROTEIN SEQUENCE</scope>
    <source>
        <tissue>Liver</tissue>
    </source>
</reference>
<reference key="2">
    <citation type="journal article" date="2004" name="Genome Res.">
        <title>The status, quality, and expansion of the NIH full-length cDNA project: the Mammalian Gene Collection (MGC).</title>
        <authorList>
            <consortium name="The MGC Project Team"/>
        </authorList>
    </citation>
    <scope>NUCLEOTIDE SEQUENCE [LARGE SCALE MRNA]</scope>
    <source>
        <tissue>Liver</tissue>
    </source>
</reference>
<reference key="3">
    <citation type="journal article" date="1997" name="Proc. Natl. Acad. Sci. U.S.A.">
        <title>Molecular characterization of human and mouse fatty acid amide hydrolases.</title>
        <authorList>
            <person name="Giang D.K."/>
            <person name="Cravatt B.F."/>
        </authorList>
    </citation>
    <scope>FUNCTION</scope>
    <scope>CATALYTIC ACTIVITY</scope>
    <scope>ACTIVITY REGULATION</scope>
    <scope>SUBCELLULAR LOCATION</scope>
</reference>
<reference key="4">
    <citation type="journal article" date="1997" name="J. Neurosci. Res.">
        <title>Fatty acid amide hydrolase, the degradative enzyme for anandamide and oleamide, has selective distribution in neurons within the rat central nervous system.</title>
        <authorList>
            <person name="Thomas E.A."/>
            <person name="Cravatt B.F."/>
            <person name="Danielson P.E."/>
            <person name="Gilula N.B."/>
            <person name="Sutcliffe J.G."/>
        </authorList>
    </citation>
    <scope>TISSUE SPECIFICITY</scope>
</reference>
<reference key="5">
    <citation type="journal article" date="1997" name="Biochem. Biophys. Res. Commun.">
        <title>Reversible hydrolysis and synthesis of anandamide demonstrated by recombinant rat fatty-acid amide hydrolase.</title>
        <authorList>
            <person name="Kurahashi Y."/>
            <person name="Ueda N."/>
            <person name="Suzuki H."/>
            <person name="Suzuki M."/>
            <person name="Yamamoto S."/>
        </authorList>
    </citation>
    <scope>FUNCTION</scope>
    <scope>CATALYTIC ACTIVITY</scope>
    <scope>BIOPHYSICOCHEMICAL PROPERTIES</scope>
</reference>
<reference key="6">
    <citation type="journal article" date="1998" name="Biochemistry">
        <title>Comparative characterization of a wild type and transmembrane domain-deleted fatty acid amide hydrolase: identification of the transmembrane domain as a site for oligomerization.</title>
        <authorList>
            <person name="Patricelli M.P."/>
            <person name="Lashuel H.A."/>
            <person name="Giang D.K."/>
            <person name="Kelly J.W."/>
            <person name="Cravatt B.F."/>
        </authorList>
    </citation>
    <scope>FUNCTION</scope>
    <scope>CATALYTIC ACTIVITY</scope>
    <scope>BIOPHYSICOCHEMICAL PROPERTIES</scope>
    <scope>SUBCELLULAR LOCATION</scope>
</reference>
<reference key="7">
    <citation type="journal article" date="1999" name="Biochim. Biophys. Acta">
        <title>Anandamide amidohydrolase of porcine brain: cDNA cloning, functional expression and site-directed mutagenesis.</title>
        <authorList>
            <person name="Goparaju S.K."/>
            <person name="Kurahashi Y."/>
            <person name="Suzuki H."/>
            <person name="Ueda N."/>
            <person name="Yamamoto S."/>
        </authorList>
    </citation>
    <scope>FUNCTION</scope>
    <scope>CATALYTIC ACTIVITY</scope>
    <scope>BIOPHYSICOCHEMICAL PROPERTIES</scope>
</reference>
<reference key="8">
    <citation type="journal article" date="2000" name="Bioorg. Med. Chem. Lett.">
        <title>Fatty acid amide hydrolase substrate specificity.</title>
        <authorList>
            <person name="Boger D.L."/>
            <person name="Fecik R.A."/>
            <person name="Patterson J.E."/>
            <person name="Miyauchi H."/>
            <person name="Patricelli M.P."/>
            <person name="Cravatt B.F."/>
        </authorList>
    </citation>
    <scope>FUNCTION</scope>
    <scope>CATALYTIC ACTIVITY</scope>
</reference>
<reference key="9">
    <citation type="journal article" date="2003" name="J. Biol. Chem.">
        <title>Evidence for distinct roles in catalysis for residues of the serine-serine-lysine catalytic triad of fatty acid amide hydrolase.</title>
        <authorList>
            <person name="McKinney M.K."/>
            <person name="Cravatt B.F."/>
        </authorList>
    </citation>
    <scope>CHARACTERIZATION</scope>
    <scope>MUTAGENESIS OF LYS-142 AND SER-217</scope>
</reference>
<reference key="10">
    <citation type="journal article" date="2004" name="Biochemistry">
        <title>Assignment of endogenous substrates to enzymes by global metabolite profiling.</title>
        <authorList>
            <person name="Saghatelian A."/>
            <person name="Trauger S.A."/>
            <person name="Want E.J."/>
            <person name="Hawkins E.G."/>
            <person name="Siuzdak G."/>
            <person name="Cravatt B.F."/>
        </authorList>
    </citation>
    <scope>FUNCTION</scope>
    <scope>CATALYTIC ACTIVITY</scope>
</reference>
<reference key="11">
    <citation type="journal article" date="2007" name="Biochemistry">
        <title>Hydrolysis of prostaglandin glycerol esters by the endocannabinoid-hydrolyzing enzymes, monoacylglycerol lipase and fatty acid amide hydrolase.</title>
        <authorList>
            <person name="Vila A."/>
            <person name="Rosengarth A."/>
            <person name="Piomelli D."/>
            <person name="Cravatt B."/>
            <person name="Marnett L.J."/>
        </authorList>
    </citation>
    <scope>FUNCTION</scope>
    <scope>CATALYTIC ACTIVITY</scope>
    <scope>BIOPHYSICOCHEMICAL PROPERTIES</scope>
</reference>
<reference key="12">
    <citation type="journal article" date="2002" name="Science">
        <title>Structural adaptations in a membrane enzyme that terminates endocannabinoid signaling.</title>
        <authorList>
            <person name="Bracey M.H."/>
            <person name="Hanson M.A."/>
            <person name="Masuda K.R."/>
            <person name="Stevens R.C."/>
            <person name="Cravatt B.F."/>
        </authorList>
    </citation>
    <scope>X-RAY CRYSTALLOGRAPHY (2.8 ANGSTROMS) OF 37-573 IN COMPLEX WITH INHIBITOR METHOXY-ARACHIDONYL FLUOROPHOSPHATE</scope>
    <scope>SUBUNIT</scope>
    <scope>TOPOLOGY</scope>
</reference>
<reference key="13">
    <citation type="journal article" date="2008" name="Proc. Natl. Acad. Sci. U.S.A.">
        <title>Structure-guided inhibitor design for human FAAH by interspecies active site conversion.</title>
        <authorList>
            <person name="Mileni M."/>
            <person name="Johnson D.S."/>
            <person name="Wang Z."/>
            <person name="Everdeen D.S."/>
            <person name="Liimatta M."/>
            <person name="Pabst B."/>
            <person name="Bhattacharya K."/>
            <person name="Nugent R.A."/>
            <person name="Kamtekar S."/>
            <person name="Cravatt B.F."/>
            <person name="Ahn K."/>
            <person name="Stevens R.C."/>
        </authorList>
    </citation>
    <scope>X-RAY CRYSTALLOGRAPHY (2.75 ANGSTROMS) OF 32-579 IN COMPLEX WITH INHIBITOR PF-750</scope>
    <scope>TOPOLOGY</scope>
    <scope>SUBUNIT</scope>
</reference>
<proteinExistence type="evidence at protein level"/>
<organism>
    <name type="scientific">Rattus norvegicus</name>
    <name type="common">Rat</name>
    <dbReference type="NCBI Taxonomy" id="10116"/>
    <lineage>
        <taxon>Eukaryota</taxon>
        <taxon>Metazoa</taxon>
        <taxon>Chordata</taxon>
        <taxon>Craniata</taxon>
        <taxon>Vertebrata</taxon>
        <taxon>Euteleostomi</taxon>
        <taxon>Mammalia</taxon>
        <taxon>Eutheria</taxon>
        <taxon>Euarchontoglires</taxon>
        <taxon>Glires</taxon>
        <taxon>Rodentia</taxon>
        <taxon>Myomorpha</taxon>
        <taxon>Muroidea</taxon>
        <taxon>Muridae</taxon>
        <taxon>Murinae</taxon>
        <taxon>Rattus</taxon>
    </lineage>
</organism>
<feature type="chain" id="PRO_0000105267" description="Fatty-acid amide hydrolase 1">
    <location>
        <begin position="1"/>
        <end position="579"/>
    </location>
</feature>
<feature type="transmembrane region" description="Helical" evidence="3">
    <location>
        <begin position="9"/>
        <end position="29"/>
    </location>
</feature>
<feature type="topological domain" description="Cytoplasmic" evidence="15">
    <location>
        <begin position="30"/>
        <end position="403"/>
    </location>
</feature>
<feature type="intramembrane region" evidence="15">
    <location>
        <begin position="404"/>
        <end position="433"/>
    </location>
</feature>
<feature type="topological domain" description="Cytoplasmic" evidence="15">
    <location>
        <begin position="434"/>
        <end position="579"/>
    </location>
</feature>
<feature type="active site" description="Charge relay system">
    <location>
        <position position="142"/>
    </location>
</feature>
<feature type="active site" description="Charge relay system">
    <location>
        <position position="217"/>
    </location>
</feature>
<feature type="active site" description="Acyl-ester intermediate">
    <location>
        <position position="241"/>
    </location>
</feature>
<feature type="binding site">
    <location>
        <position position="191"/>
    </location>
    <ligand>
        <name>substrate</name>
    </ligand>
</feature>
<feature type="binding site">
    <location>
        <position position="217"/>
    </location>
    <ligand>
        <name>substrate</name>
    </ligand>
</feature>
<feature type="binding site">
    <location>
        <begin position="238"/>
        <end position="241"/>
    </location>
    <ligand>
        <name>substrate</name>
    </ligand>
</feature>
<feature type="modified residue" description="Phosphoserine" evidence="1">
    <location>
        <position position="241"/>
    </location>
</feature>
<feature type="mutagenesis site" description="Lowers activity 40000-fold. Lowers activity 70000-fold; when associated with A-217." evidence="7">
    <original>K</original>
    <variation>A</variation>
    <location>
        <position position="142"/>
    </location>
</feature>
<feature type="mutagenesis site" description="Lowers activity 3000-fold. Lowers activity 70000-fold; when associated with A-142." evidence="7">
    <original>S</original>
    <variation>A</variation>
    <location>
        <position position="217"/>
    </location>
</feature>
<feature type="helix" evidence="19">
    <location>
        <begin position="35"/>
        <end position="65"/>
    </location>
</feature>
<feature type="helix" evidence="19">
    <location>
        <begin position="71"/>
        <end position="76"/>
    </location>
</feature>
<feature type="helix" evidence="19">
    <location>
        <begin position="79"/>
        <end position="87"/>
    </location>
</feature>
<feature type="strand" evidence="18">
    <location>
        <begin position="89"/>
        <end position="91"/>
    </location>
</feature>
<feature type="helix" evidence="19">
    <location>
        <begin position="93"/>
        <end position="111"/>
    </location>
</feature>
<feature type="strand" evidence="19">
    <location>
        <begin position="114"/>
        <end position="117"/>
    </location>
</feature>
<feature type="helix" evidence="19">
    <location>
        <begin position="121"/>
        <end position="127"/>
    </location>
</feature>
<feature type="turn" evidence="19">
    <location>
        <begin position="133"/>
        <end position="136"/>
    </location>
</feature>
<feature type="strand" evidence="19">
    <location>
        <begin position="138"/>
        <end position="142"/>
    </location>
</feature>
<feature type="helix" evidence="19">
    <location>
        <begin position="157"/>
        <end position="159"/>
    </location>
</feature>
<feature type="strand" evidence="19">
    <location>
        <begin position="164"/>
        <end position="166"/>
    </location>
</feature>
<feature type="helix" evidence="19">
    <location>
        <begin position="169"/>
        <end position="176"/>
    </location>
</feature>
<feature type="strand" evidence="19">
    <location>
        <begin position="180"/>
        <end position="185"/>
    </location>
</feature>
<feature type="helix" evidence="21">
    <location>
        <begin position="189"/>
        <end position="191"/>
    </location>
</feature>
<feature type="strand" evidence="19">
    <location>
        <begin position="193"/>
        <end position="195"/>
    </location>
</feature>
<feature type="turn" evidence="19">
    <location>
        <begin position="199"/>
        <end position="201"/>
    </location>
</feature>
<feature type="strand" evidence="19">
    <location>
        <begin position="216"/>
        <end position="218"/>
    </location>
</feature>
<feature type="helix" evidence="19">
    <location>
        <begin position="219"/>
        <end position="226"/>
    </location>
</feature>
<feature type="strand" evidence="19">
    <location>
        <begin position="231"/>
        <end position="240"/>
    </location>
</feature>
<feature type="helix" evidence="19">
    <location>
        <begin position="243"/>
        <end position="249"/>
    </location>
</feature>
<feature type="strand" evidence="19">
    <location>
        <begin position="252"/>
        <end position="255"/>
    </location>
</feature>
<feature type="helix" evidence="19">
    <location>
        <begin position="258"/>
        <end position="260"/>
    </location>
</feature>
<feature type="strand" evidence="19">
    <location>
        <begin position="279"/>
        <end position="286"/>
    </location>
</feature>
<feature type="helix" evidence="19">
    <location>
        <begin position="287"/>
        <end position="297"/>
    </location>
</feature>
<feature type="helix" evidence="19">
    <location>
        <begin position="300"/>
        <end position="305"/>
    </location>
</feature>
<feature type="helix" evidence="19">
    <location>
        <begin position="316"/>
        <end position="319"/>
    </location>
</feature>
<feature type="strand" evidence="19">
    <location>
        <begin position="326"/>
        <end position="329"/>
    </location>
</feature>
<feature type="strand" evidence="19">
    <location>
        <begin position="334"/>
        <end position="336"/>
    </location>
</feature>
<feature type="helix" evidence="19">
    <location>
        <begin position="340"/>
        <end position="355"/>
    </location>
</feature>
<feature type="strand" evidence="19">
    <location>
        <begin position="359"/>
        <end position="362"/>
    </location>
</feature>
<feature type="helix" evidence="19">
    <location>
        <begin position="368"/>
        <end position="373"/>
    </location>
</feature>
<feature type="helix" evidence="19">
    <location>
        <begin position="375"/>
        <end position="380"/>
    </location>
</feature>
<feature type="turn" evidence="16">
    <location>
        <begin position="382"/>
        <end position="385"/>
    </location>
</feature>
<feature type="helix" evidence="19">
    <location>
        <begin position="386"/>
        <end position="389"/>
    </location>
</feature>
<feature type="helix" evidence="19">
    <location>
        <begin position="390"/>
        <end position="392"/>
    </location>
</feature>
<feature type="helix" evidence="19">
    <location>
        <begin position="399"/>
        <end position="401"/>
    </location>
</feature>
<feature type="helix" evidence="19">
    <location>
        <begin position="404"/>
        <end position="408"/>
    </location>
</feature>
<feature type="helix" evidence="19">
    <location>
        <begin position="412"/>
        <end position="422"/>
    </location>
</feature>
<feature type="turn" evidence="19">
    <location>
        <begin position="423"/>
        <end position="425"/>
    </location>
</feature>
<feature type="helix" evidence="19">
    <location>
        <begin position="427"/>
        <end position="435"/>
    </location>
</feature>
<feature type="strand" evidence="17">
    <location>
        <begin position="436"/>
        <end position="438"/>
    </location>
</feature>
<feature type="helix" evidence="19">
    <location>
        <begin position="441"/>
        <end position="464"/>
    </location>
</feature>
<feature type="strand" evidence="19">
    <location>
        <begin position="468"/>
        <end position="473"/>
    </location>
</feature>
<feature type="helix" evidence="19">
    <location>
        <begin position="484"/>
        <end position="486"/>
    </location>
</feature>
<feature type="helix" evidence="19">
    <location>
        <begin position="488"/>
        <end position="491"/>
    </location>
</feature>
<feature type="helix" evidence="19">
    <location>
        <begin position="492"/>
        <end position="499"/>
    </location>
</feature>
<feature type="strand" evidence="19">
    <location>
        <begin position="504"/>
        <end position="511"/>
    </location>
</feature>
<feature type="helix" evidence="19">
    <location>
        <begin position="514"/>
        <end position="520"/>
    </location>
</feature>
<feature type="helix" evidence="19">
    <location>
        <begin position="530"/>
        <end position="538"/>
    </location>
</feature>
<feature type="strand" evidence="19">
    <location>
        <begin position="546"/>
        <end position="552"/>
    </location>
</feature>
<feature type="helix" evidence="19">
    <location>
        <begin position="558"/>
        <end position="572"/>
    </location>
</feature>
<feature type="helix" evidence="20">
    <location>
        <begin position="574"/>
        <end position="576"/>
    </location>
</feature>
<sequence>MVLSEVWTTLSGVSGVCLACSLLSAAVVLRWTGRQKARGAATRARQKQRASLETMDKAVQRFRLQNPDLDSEALLTLPLLQLVQKLQSGELSPEAVFFTYLGKAWEVNKGTNCVTSYLTDCETQLSQAPRQGLLYGVPVSLKECFSYKGHDSTLGLSLNEGMPSESDCVVVQVLKLQGAVPFVHTNVPQSMLSFDCSNPLFGQTMNPWKSSKSPGGSSGGEGALIGSGGSPLGLGTDIGGSIRFPSAFCGICGLKPTGNRLSKSGLKGCVYGQTAVQLSLGPMARDVESLALCLKALLCEHLFTLDPTVPPLPFREEVYRSSRPLRVGYYETDNYTMPSPAMRRALIETKQRLEAAGHTLIPFLPNNIPYALEVLSAGGLFSDGGRSFLQNFKGDFVDPCLGDLILILRLPSWFKRLLSLLLKPLFPRLAAFLNSMRPRSAEKLWKLQHEIEMYRQSVIAQWKAMNLDVLLTPMLGPALDLNTPGRATGAISYTVLYNCLDFPAGVVPVTTVTAEDDAQMELYKGYFGDIWDIILKKAMKNSVGLPVAVQCVALPWQEELCLRFMREVEQLMTPQKQPS</sequence>
<evidence type="ECO:0000250" key="1">
    <source>
        <dbReference type="UniProtKB" id="O00519"/>
    </source>
</evidence>
<evidence type="ECO:0000250" key="2">
    <source>
        <dbReference type="UniProtKB" id="O08914"/>
    </source>
</evidence>
<evidence type="ECO:0000255" key="3"/>
<evidence type="ECO:0000269" key="4">
    <source>
    </source>
</evidence>
<evidence type="ECO:0000269" key="5">
    <source>
    </source>
</evidence>
<evidence type="ECO:0000269" key="6">
    <source>
    </source>
</evidence>
<evidence type="ECO:0000269" key="7">
    <source>
    </source>
</evidence>
<evidence type="ECO:0000269" key="8">
    <source>
    </source>
</evidence>
<evidence type="ECO:0000269" key="9">
    <source>
    </source>
</evidence>
<evidence type="ECO:0000269" key="10">
    <source>
    </source>
</evidence>
<evidence type="ECO:0000269" key="11">
    <source>
    </source>
</evidence>
<evidence type="ECO:0000269" key="12">
    <source>
    </source>
</evidence>
<evidence type="ECO:0000269" key="13">
    <source>
    </source>
</evidence>
<evidence type="ECO:0000269" key="14">
    <source>
    </source>
</evidence>
<evidence type="ECO:0000305" key="15"/>
<evidence type="ECO:0007829" key="16">
    <source>
        <dbReference type="PDB" id="1MT5"/>
    </source>
</evidence>
<evidence type="ECO:0007829" key="17">
    <source>
        <dbReference type="PDB" id="3LJ7"/>
    </source>
</evidence>
<evidence type="ECO:0007829" key="18">
    <source>
        <dbReference type="PDB" id="3OJ8"/>
    </source>
</evidence>
<evidence type="ECO:0007829" key="19">
    <source>
        <dbReference type="PDB" id="3PPM"/>
    </source>
</evidence>
<evidence type="ECO:0007829" key="20">
    <source>
        <dbReference type="PDB" id="3PR0"/>
    </source>
</evidence>
<evidence type="ECO:0007829" key="21">
    <source>
        <dbReference type="PDB" id="3QK5"/>
    </source>
</evidence>
<accession>P97612</accession>
<accession>Q5BKA3</accession>
<comment type="function">
    <text evidence="2 4 5 8 9 11 12 14">Catalyzes the hydrolysis of endogenous amidated lipids like the sleep-inducing lipid oleamide ((9Z)-octadecenamide), the endocannabinoid anandamide (N-(5Z,8Z,11Z,14Z-eicosatetraenoyl)-ethanolamine), as well as other fatty amides, to their corresponding fatty acids, thereby regulating the signaling functions of these molecules (PubMed:10526230, PubMed:11128635, PubMed:15533037, PubMed:17649977, PubMed:9122178, PubMed:9299394, PubMed:9790682). Hydrolyzes polyunsaturated substrate anandamide preferentially as compared to monounsaturated substrates (PubMed:11128635, PubMed:9122178). It can also catalyze the hydrolysis of the endocannabinoid 2-arachidonoylglycerol (2-(5Z,8Z,11Z,14Z-eicosatetraenoyl)-glycerol) (PubMed:10526230, PubMed:15533037, PubMed:17649977). FAAH cooperates with PM20D1 in the hydrolysis of amino acid-conjugated fatty acids such as N-fatty acyl glycine and N-fatty acyl-L-serine, thereby acting as a physiological regulator of specific subsets of intracellular, but not of extracellular, N-fatty acyl amino acids (By similarity).</text>
</comment>
<comment type="catalytic activity">
    <reaction evidence="4 5 9 11 12">
        <text>N-(5Z,8Z,11Z,14Z-eicosatetraenoyl)-ethanolamine + H2O = ethanolamine + (5Z,8Z,11Z,14Z)-eicosatetraenoate</text>
        <dbReference type="Rhea" id="RHEA:26136"/>
        <dbReference type="ChEBI" id="CHEBI:2700"/>
        <dbReference type="ChEBI" id="CHEBI:15377"/>
        <dbReference type="ChEBI" id="CHEBI:32395"/>
        <dbReference type="ChEBI" id="CHEBI:57603"/>
        <dbReference type="EC" id="3.5.1.99"/>
    </reaction>
    <physiologicalReaction direction="left-to-right" evidence="4 5 9 11 12">
        <dbReference type="Rhea" id="RHEA:26137"/>
    </physiologicalReaction>
</comment>
<comment type="catalytic activity">
    <reaction evidence="4 5 11 12 14">
        <text>(9Z)-octadecenamide + H2O = (9Z)-octadecenoate + NH4(+)</text>
        <dbReference type="Rhea" id="RHEA:26506"/>
        <dbReference type="ChEBI" id="CHEBI:15377"/>
        <dbReference type="ChEBI" id="CHEBI:28938"/>
        <dbReference type="ChEBI" id="CHEBI:30823"/>
        <dbReference type="ChEBI" id="CHEBI:116314"/>
        <dbReference type="EC" id="3.5.1.99"/>
    </reaction>
    <physiologicalReaction direction="left-to-right" evidence="4 5 11 12 14">
        <dbReference type="Rhea" id="RHEA:26507"/>
    </physiologicalReaction>
</comment>
<comment type="catalytic activity">
    <reaction evidence="4 8 9">
        <text>2-(5Z,8Z,11Z,14Z-eicosatetraenoyl)-glycerol + H2O = glycerol + (5Z,8Z,11Z,14Z)-eicosatetraenoate + H(+)</text>
        <dbReference type="Rhea" id="RHEA:26132"/>
        <dbReference type="ChEBI" id="CHEBI:15377"/>
        <dbReference type="ChEBI" id="CHEBI:15378"/>
        <dbReference type="ChEBI" id="CHEBI:17754"/>
        <dbReference type="ChEBI" id="CHEBI:32395"/>
        <dbReference type="ChEBI" id="CHEBI:52392"/>
    </reaction>
    <physiologicalReaction direction="left-to-right" evidence="4 8 9">
        <dbReference type="Rhea" id="RHEA:26133"/>
    </physiologicalReaction>
</comment>
<comment type="catalytic activity">
    <reaction evidence="5">
        <text>(9Z,12Z,15Z)-octadecatrienamide + H2O = (9Z,12Z,15Z)-octadecatrienoate + NH4(+)</text>
        <dbReference type="Rhea" id="RHEA:62976"/>
        <dbReference type="ChEBI" id="CHEBI:15377"/>
        <dbReference type="ChEBI" id="CHEBI:28938"/>
        <dbReference type="ChEBI" id="CHEBI:32387"/>
        <dbReference type="ChEBI" id="CHEBI:142684"/>
    </reaction>
    <physiologicalReaction direction="left-to-right" evidence="5">
        <dbReference type="Rhea" id="RHEA:62977"/>
    </physiologicalReaction>
</comment>
<comment type="catalytic activity">
    <reaction evidence="5 12">
        <text>(5Z,8Z,11Z,14Z)-eicosatetraenamide + H2O = (5Z,8Z,11Z,14Z)-eicosatetraenoate + NH4(+)</text>
        <dbReference type="Rhea" id="RHEA:63016"/>
        <dbReference type="ChEBI" id="CHEBI:15377"/>
        <dbReference type="ChEBI" id="CHEBI:28938"/>
        <dbReference type="ChEBI" id="CHEBI:32395"/>
        <dbReference type="ChEBI" id="CHEBI:137830"/>
    </reaction>
    <physiologicalReaction direction="left-to-right" evidence="5 12">
        <dbReference type="Rhea" id="RHEA:63017"/>
    </physiologicalReaction>
</comment>
<comment type="catalytic activity">
    <reaction evidence="5">
        <text>(6Z)-octadecenamide + H2O = (6Z)-octadecenoate + NH4(+)</text>
        <dbReference type="Rhea" id="RHEA:63008"/>
        <dbReference type="ChEBI" id="CHEBI:15377"/>
        <dbReference type="ChEBI" id="CHEBI:28938"/>
        <dbReference type="ChEBI" id="CHEBI:32375"/>
        <dbReference type="ChEBI" id="CHEBI:146168"/>
    </reaction>
    <physiologicalReaction direction="left-to-right" evidence="5">
        <dbReference type="Rhea" id="RHEA:63009"/>
    </physiologicalReaction>
</comment>
<comment type="catalytic activity">
    <reaction evidence="5">
        <text>(15Z)-tetracosenamide + H2O = (15Z)-tetracosenoate + NH4(+)</text>
        <dbReference type="Rhea" id="RHEA:63028"/>
        <dbReference type="ChEBI" id="CHEBI:15377"/>
        <dbReference type="ChEBI" id="CHEBI:28938"/>
        <dbReference type="ChEBI" id="CHEBI:32392"/>
        <dbReference type="ChEBI" id="CHEBI:146166"/>
    </reaction>
    <physiologicalReaction direction="left-to-right" evidence="5">
        <dbReference type="Rhea" id="RHEA:63029"/>
    </physiologicalReaction>
</comment>
<comment type="catalytic activity">
    <reaction evidence="5">
        <text>(8Z,11Z,14Z)-eicosatrienamide + H2O = (8Z,11Z,14Z)-eicosatrienoate + NH4(+)</text>
        <dbReference type="Rhea" id="RHEA:62996"/>
        <dbReference type="ChEBI" id="CHEBI:15377"/>
        <dbReference type="ChEBI" id="CHEBI:28938"/>
        <dbReference type="ChEBI" id="CHEBI:71589"/>
        <dbReference type="ChEBI" id="CHEBI:146163"/>
    </reaction>
    <physiologicalReaction direction="left-to-right" evidence="5">
        <dbReference type="Rhea" id="RHEA:62997"/>
    </physiologicalReaction>
</comment>
<comment type="catalytic activity">
    <reaction evidence="5">
        <text>(11Z,14Z,17Z)-eicosatrienamide + H2O = (11Z,14Z,17Z)-eicosatrienoate + NH4(+)</text>
        <dbReference type="Rhea" id="RHEA:63000"/>
        <dbReference type="ChEBI" id="CHEBI:15377"/>
        <dbReference type="ChEBI" id="CHEBI:28938"/>
        <dbReference type="ChEBI" id="CHEBI:77223"/>
        <dbReference type="ChEBI" id="CHEBI:146164"/>
    </reaction>
    <physiologicalReaction direction="left-to-right" evidence="5">
        <dbReference type="Rhea" id="RHEA:63001"/>
    </physiologicalReaction>
</comment>
<comment type="catalytic activity">
    <reaction evidence="5">
        <text>(11Z,14Z)-eicosadienamide + H2O = (11Z,14Z)-eicosadienoate + NH4(+)</text>
        <dbReference type="Rhea" id="RHEA:63004"/>
        <dbReference type="ChEBI" id="CHEBI:15377"/>
        <dbReference type="ChEBI" id="CHEBI:28938"/>
        <dbReference type="ChEBI" id="CHEBI:77220"/>
        <dbReference type="ChEBI" id="CHEBI:146165"/>
    </reaction>
    <physiologicalReaction direction="left-to-right" evidence="5">
        <dbReference type="Rhea" id="RHEA:63005"/>
    </physiologicalReaction>
</comment>
<comment type="catalytic activity">
    <reaction evidence="5">
        <text>(9Z,12Z)-octadecadienamide + H2O = (9Z,12Z)-octadecadienoate + NH4(+)</text>
        <dbReference type="Rhea" id="RHEA:63020"/>
        <dbReference type="ChEBI" id="CHEBI:15377"/>
        <dbReference type="ChEBI" id="CHEBI:28938"/>
        <dbReference type="ChEBI" id="CHEBI:30245"/>
        <dbReference type="ChEBI" id="CHEBI:82984"/>
    </reaction>
    <physiologicalReaction direction="left-to-right" evidence="5">
        <dbReference type="Rhea" id="RHEA:63021"/>
    </physiologicalReaction>
</comment>
<comment type="catalytic activity">
    <reaction evidence="11">
        <text>tetradecamide + H2O = tetradecanoate + NH4(+)</text>
        <dbReference type="Rhea" id="RHEA:62992"/>
        <dbReference type="ChEBI" id="CHEBI:15377"/>
        <dbReference type="ChEBI" id="CHEBI:28938"/>
        <dbReference type="ChEBI" id="CHEBI:30807"/>
        <dbReference type="ChEBI" id="CHEBI:137125"/>
    </reaction>
    <physiologicalReaction direction="left-to-right" evidence="11">
        <dbReference type="Rhea" id="RHEA:62993"/>
    </physiologicalReaction>
</comment>
<comment type="catalytic activity">
    <reaction evidence="8">
        <text>N-(9Z-octadecenoyl) ethanolamine + H2O = ethanolamine + (9Z)-octadecenoate</text>
        <dbReference type="Rhea" id="RHEA:45060"/>
        <dbReference type="ChEBI" id="CHEBI:15377"/>
        <dbReference type="ChEBI" id="CHEBI:30823"/>
        <dbReference type="ChEBI" id="CHEBI:57603"/>
        <dbReference type="ChEBI" id="CHEBI:71466"/>
    </reaction>
    <physiologicalReaction direction="left-to-right" evidence="8">
        <dbReference type="Rhea" id="RHEA:45061"/>
    </physiologicalReaction>
</comment>
<comment type="catalytic activity">
    <reaction evidence="8">
        <text>N-(9Z-octadecenoyl)-taurine + H2O = taurine + (9Z)-octadecenoate</text>
        <dbReference type="Rhea" id="RHEA:63148"/>
        <dbReference type="ChEBI" id="CHEBI:15377"/>
        <dbReference type="ChEBI" id="CHEBI:30823"/>
        <dbReference type="ChEBI" id="CHEBI:146191"/>
        <dbReference type="ChEBI" id="CHEBI:507393"/>
    </reaction>
    <physiologicalReaction direction="left-to-right" evidence="8">
        <dbReference type="Rhea" id="RHEA:63149"/>
    </physiologicalReaction>
</comment>
<comment type="catalytic activity">
    <reaction evidence="12">
        <text>1-O-methyl-(5Z,8Z,11Z,14Z)-eicosatetraenoate + H2O = methanol + (5Z,8Z,11Z,14Z)-eicosatetraenoate + H(+)</text>
        <dbReference type="Rhea" id="RHEA:63052"/>
        <dbReference type="ChEBI" id="CHEBI:15377"/>
        <dbReference type="ChEBI" id="CHEBI:15378"/>
        <dbReference type="ChEBI" id="CHEBI:17790"/>
        <dbReference type="ChEBI" id="CHEBI:32395"/>
        <dbReference type="ChEBI" id="CHEBI:78033"/>
    </reaction>
    <physiologicalReaction direction="left-to-right" evidence="12">
        <dbReference type="Rhea" id="RHEA:63053"/>
    </physiologicalReaction>
</comment>
<comment type="catalytic activity">
    <reaction evidence="5">
        <text>(11Z)-eicosenamide + H2O = (11Z)-eicosenoate + NH4(+)</text>
        <dbReference type="Rhea" id="RHEA:63120"/>
        <dbReference type="ChEBI" id="CHEBI:15377"/>
        <dbReference type="ChEBI" id="CHEBI:28938"/>
        <dbReference type="ChEBI" id="CHEBI:32426"/>
        <dbReference type="ChEBI" id="CHEBI:146167"/>
    </reaction>
    <physiologicalReaction direction="left-to-right" evidence="5">
        <dbReference type="Rhea" id="RHEA:63121"/>
    </physiologicalReaction>
</comment>
<comment type="catalytic activity">
    <reaction evidence="2">
        <text>N-(9Z-hexadecenoyl) ethanolamine + H2O = (9Z)-hexadecenoate + ethanolamine</text>
        <dbReference type="Rhea" id="RHEA:35563"/>
        <dbReference type="ChEBI" id="CHEBI:15377"/>
        <dbReference type="ChEBI" id="CHEBI:32372"/>
        <dbReference type="ChEBI" id="CHEBI:57603"/>
        <dbReference type="ChEBI" id="CHEBI:71465"/>
    </reaction>
    <physiologicalReaction direction="left-to-right" evidence="2">
        <dbReference type="Rhea" id="RHEA:35564"/>
    </physiologicalReaction>
</comment>
<comment type="catalytic activity">
    <reaction evidence="2">
        <text>N-octadecanoyl ethanolamine + H2O = octadecanoate + ethanolamine</text>
        <dbReference type="Rhea" id="RHEA:63124"/>
        <dbReference type="ChEBI" id="CHEBI:15377"/>
        <dbReference type="ChEBI" id="CHEBI:25629"/>
        <dbReference type="ChEBI" id="CHEBI:57603"/>
        <dbReference type="ChEBI" id="CHEBI:85299"/>
    </reaction>
    <physiologicalReaction direction="left-to-right" evidence="2">
        <dbReference type="Rhea" id="RHEA:63125"/>
    </physiologicalReaction>
</comment>
<comment type="catalytic activity">
    <reaction evidence="2">
        <text>N-docosanoyl-ethanolamine + H2O = docosanoate + ethanolamine</text>
        <dbReference type="Rhea" id="RHEA:63128"/>
        <dbReference type="ChEBI" id="CHEBI:15377"/>
        <dbReference type="ChEBI" id="CHEBI:23858"/>
        <dbReference type="ChEBI" id="CHEBI:57603"/>
        <dbReference type="ChEBI" id="CHEBI:146186"/>
    </reaction>
    <physiologicalReaction direction="left-to-right" evidence="2">
        <dbReference type="Rhea" id="RHEA:63129"/>
    </physiologicalReaction>
</comment>
<comment type="catalytic activity">
    <reaction evidence="2">
        <text>N-tetracosanoyl-taurine + H2O = tetracosanoate + taurine</text>
        <dbReference type="Rhea" id="RHEA:63140"/>
        <dbReference type="ChEBI" id="CHEBI:15377"/>
        <dbReference type="ChEBI" id="CHEBI:31014"/>
        <dbReference type="ChEBI" id="CHEBI:132049"/>
        <dbReference type="ChEBI" id="CHEBI:507393"/>
    </reaction>
    <physiologicalReaction direction="left-to-right" evidence="2">
        <dbReference type="Rhea" id="RHEA:63141"/>
    </physiologicalReaction>
</comment>
<comment type="catalytic activity">
    <reaction evidence="2">
        <text>N-(15Z-tetracosenoyl)-ethanolamine + H2O = (15Z)-tetracosenoate + ethanolamine</text>
        <dbReference type="Rhea" id="RHEA:63144"/>
        <dbReference type="ChEBI" id="CHEBI:15377"/>
        <dbReference type="ChEBI" id="CHEBI:32392"/>
        <dbReference type="ChEBI" id="CHEBI:57603"/>
        <dbReference type="ChEBI" id="CHEBI:146187"/>
    </reaction>
    <physiologicalReaction direction="left-to-right" evidence="2">
        <dbReference type="Rhea" id="RHEA:63145"/>
    </physiologicalReaction>
</comment>
<comment type="catalytic activity">
    <reaction evidence="2">
        <text>N-docosanoyl-taurine + H2O = docosanoate + taurine</text>
        <dbReference type="Rhea" id="RHEA:63156"/>
        <dbReference type="ChEBI" id="CHEBI:15377"/>
        <dbReference type="ChEBI" id="CHEBI:23858"/>
        <dbReference type="ChEBI" id="CHEBI:146196"/>
        <dbReference type="ChEBI" id="CHEBI:507393"/>
    </reaction>
    <physiologicalReaction direction="left-to-right" evidence="2">
        <dbReference type="Rhea" id="RHEA:63157"/>
    </physiologicalReaction>
</comment>
<comment type="catalytic activity">
    <reaction evidence="2">
        <text>N-(15Z-tetracosenoyl)-taurine + H2O = (15Z)-tetracosenoate + taurine</text>
        <dbReference type="Rhea" id="RHEA:63160"/>
        <dbReference type="ChEBI" id="CHEBI:15377"/>
        <dbReference type="ChEBI" id="CHEBI:32392"/>
        <dbReference type="ChEBI" id="CHEBI:146198"/>
        <dbReference type="ChEBI" id="CHEBI:507393"/>
    </reaction>
    <physiologicalReaction direction="left-to-right" evidence="2">
        <dbReference type="Rhea" id="RHEA:63161"/>
    </physiologicalReaction>
</comment>
<comment type="catalytic activity">
    <reaction evidence="2">
        <text>N-tricosanoyl-taurine + H2O = tricosanoate + taurine</text>
        <dbReference type="Rhea" id="RHEA:63164"/>
        <dbReference type="ChEBI" id="CHEBI:15377"/>
        <dbReference type="ChEBI" id="CHEBI:79007"/>
        <dbReference type="ChEBI" id="CHEBI:146197"/>
        <dbReference type="ChEBI" id="CHEBI:507393"/>
    </reaction>
    <physiologicalReaction direction="left-to-right" evidence="2">
        <dbReference type="Rhea" id="RHEA:63165"/>
    </physiologicalReaction>
</comment>
<comment type="catalytic activity">
    <reaction evidence="2">
        <text>(9Z)-octadecenoate + glycine = N-(9Z-octadecenoyl)glycine + H2O</text>
        <dbReference type="Rhea" id="RHEA:51316"/>
        <dbReference type="ChEBI" id="CHEBI:15377"/>
        <dbReference type="ChEBI" id="CHEBI:30823"/>
        <dbReference type="ChEBI" id="CHEBI:57305"/>
        <dbReference type="ChEBI" id="CHEBI:133992"/>
    </reaction>
    <physiologicalReaction direction="right-to-left" evidence="2">
        <dbReference type="Rhea" id="RHEA:51318"/>
    </physiologicalReaction>
</comment>
<comment type="catalytic activity">
    <reaction evidence="2">
        <text>N-(5Z,8Z,11Z,14Z)-eicosatetraenoyl-glycine + H2O = (5Z,8Z,11Z,14Z)-eicosatetraenoate + glycine</text>
        <dbReference type="Rhea" id="RHEA:64108"/>
        <dbReference type="ChEBI" id="CHEBI:15377"/>
        <dbReference type="ChEBI" id="CHEBI:32395"/>
        <dbReference type="ChEBI" id="CHEBI:57305"/>
        <dbReference type="ChEBI" id="CHEBI:59002"/>
    </reaction>
    <physiologicalReaction direction="left-to-right" evidence="2">
        <dbReference type="Rhea" id="RHEA:64109"/>
    </physiologicalReaction>
</comment>
<comment type="catalytic activity">
    <reaction evidence="2">
        <text>N-(5Z,8Z,11Z,14Z-eicosatetraenoyl)-L-serine + H2O = (5Z,8Z,11Z,14Z)-eicosatetraenoate + L-serine</text>
        <dbReference type="Rhea" id="RHEA:64116"/>
        <dbReference type="ChEBI" id="CHEBI:15377"/>
        <dbReference type="ChEBI" id="CHEBI:32395"/>
        <dbReference type="ChEBI" id="CHEBI:33384"/>
        <dbReference type="ChEBI" id="CHEBI:149697"/>
    </reaction>
    <physiologicalReaction direction="left-to-right" evidence="2">
        <dbReference type="Rhea" id="RHEA:64117"/>
    </physiologicalReaction>
</comment>
<comment type="activity regulation">
    <text evidence="11">inhibited by trifluoromethyl ketone.</text>
</comment>
<comment type="biophysicochemical properties">
    <kinetics>
        <KM evidence="14">23 uM for oleamide ((9Z)-octadecenamide)</KM>
        <KM evidence="12">100 uM for arachidonamide ((5Z,8Z,11Z,14Z)-eicosatetraenamide)</KM>
        <KM evidence="12">45 uM for methyl arachidonate (1-O-methyl-(5Z,8Z,11Z,14Z)-eicosatetraenoate)</KM>
        <KM evidence="12">18 uM for anandamide (N-(5Z,8Z,11Z,14Z-eicosatetraenoyl)-ethanolamine)</KM>
        <KM evidence="9">34 uM for anandamide (N-(5Z,8Z,11Z,14Z-eicosatetraenoyl)-ethanolamine)</KM>
        <KM evidence="9">89 uM for 2-arachidonoylglycerol (2-(5Z,8Z,11Z,14Z-eicosatetraenoyl)-glycerol)</KM>
        <Vmax evidence="4">0.11 umol/min/mg enzyme for the hydrolysis of anandamide (N-(5Z,8Z,11Z,14Z-eicosatetraenoyl)-ethanolamine)</Vmax>
        <text evidence="9 14">kcat is 7.1 sec(-1) with oleamide ((9Z)-octadecenamide) (PubMed:9790682). kcat is 28 min(-1) with 2-arachidonoylglycerol (2-(5Z,8Z,11Z,14Z-eicosatetraenoyl)-glycerol) (PubMed:17649977). kcat is 16 min(-1) with anandamide (N-(5Z,8Z,11Z,14Z-eicosatetraenoyl)-ethanolamine) (PubMed:17649977).</text>
    </kinetics>
    <phDependence>
        <text evidence="14">Optimum pH is 9.5.</text>
    </phDependence>
</comment>
<comment type="subunit">
    <text evidence="6 10">Homodimer.</text>
</comment>
<comment type="interaction">
    <interactant intactId="EBI-15726093">
        <id>P97612</id>
    </interactant>
    <interactant intactId="EBI-15726093">
        <id>P97612</id>
        <label>Faah</label>
    </interactant>
    <organismsDiffer>false</organismsDiffer>
    <experiments>2</experiments>
</comment>
<comment type="subcellular location">
    <subcellularLocation>
        <location evidence="11 14">Endoplasmic reticulum membrane</location>
        <topology evidence="11">Single-pass membrane protein</topology>
    </subcellularLocation>
    <subcellularLocation>
        <location evidence="11 14">Golgi apparatus membrane</location>
        <topology evidence="11">Single-pass membrane protein</topology>
    </subcellularLocation>
    <text>Seems to be associated with the endoplasmic reticulum and/or Golgi apparatus.</text>
</comment>
<comment type="tissue specificity">
    <text evidence="13">Found in neuronal cells throughout the CNS. Expressed in liver and brain, and to a lesser extent in spleen, lung, kidney and testes.</text>
</comment>
<comment type="developmental stage">
    <text>In the CNS it accumulates progressively between embryonic day 14 and postnatal day 10, remains high until postnatal day 30, then decreases into adulthood.</text>
</comment>
<comment type="similarity">
    <text evidence="15">Belongs to the amidase family.</text>
</comment>
<dbReference type="EC" id="3.5.1.99" evidence="4 5 9 11 12 14"/>
<dbReference type="EC" id="3.1.1.-" evidence="4 8 9"/>
<dbReference type="EMBL" id="U72497">
    <property type="protein sequence ID" value="AAB26961.1"/>
    <property type="molecule type" value="mRNA"/>
</dbReference>
<dbReference type="EMBL" id="BC091148">
    <property type="protein sequence ID" value="AAH91148.1"/>
    <property type="molecule type" value="mRNA"/>
</dbReference>
<dbReference type="RefSeq" id="NP_001356055.1">
    <property type="nucleotide sequence ID" value="NM_001369126.1"/>
</dbReference>
<dbReference type="RefSeq" id="NP_077046.1">
    <property type="nucleotide sequence ID" value="NM_024132.3"/>
</dbReference>
<dbReference type="RefSeq" id="XP_003750049.1">
    <property type="nucleotide sequence ID" value="XM_003750001.4"/>
</dbReference>
<dbReference type="RefSeq" id="XP_008774266.1">
    <property type="nucleotide sequence ID" value="XM_008776044.2"/>
</dbReference>
<dbReference type="PDB" id="1MT5">
    <property type="method" value="X-ray"/>
    <property type="resolution" value="2.80 A"/>
    <property type="chains" value="A/B/C/D/E/F/G/H/I/J/K/L/M/N/O/P=37-573"/>
</dbReference>
<dbReference type="PDB" id="2VYA">
    <property type="method" value="X-ray"/>
    <property type="resolution" value="2.75 A"/>
    <property type="chains" value="A/B=32-579"/>
</dbReference>
<dbReference type="PDB" id="2WAP">
    <property type="method" value="X-ray"/>
    <property type="resolution" value="2.80 A"/>
    <property type="chains" value="A/B=31-573"/>
</dbReference>
<dbReference type="PDB" id="2WJ1">
    <property type="method" value="X-ray"/>
    <property type="resolution" value="1.84 A"/>
    <property type="chains" value="A/B=30-579"/>
</dbReference>
<dbReference type="PDB" id="2WJ2">
    <property type="method" value="X-ray"/>
    <property type="resolution" value="2.55 A"/>
    <property type="chains" value="A/B=30-579"/>
</dbReference>
<dbReference type="PDB" id="3K7F">
    <property type="method" value="X-ray"/>
    <property type="resolution" value="1.95 A"/>
    <property type="chains" value="A/B=30-579"/>
</dbReference>
<dbReference type="PDB" id="3K83">
    <property type="method" value="X-ray"/>
    <property type="resolution" value="2.25 A"/>
    <property type="chains" value="A/B=30-579"/>
</dbReference>
<dbReference type="PDB" id="3K84">
    <property type="method" value="X-ray"/>
    <property type="resolution" value="2.25 A"/>
    <property type="chains" value="A/B=30-579"/>
</dbReference>
<dbReference type="PDB" id="3LJ6">
    <property type="method" value="X-ray"/>
    <property type="resolution" value="2.42 A"/>
    <property type="chains" value="A/B=30-579"/>
</dbReference>
<dbReference type="PDB" id="3LJ7">
    <property type="method" value="X-ray"/>
    <property type="resolution" value="2.30 A"/>
    <property type="chains" value="A/B=30-579"/>
</dbReference>
<dbReference type="PDB" id="3OJ8">
    <property type="method" value="X-ray"/>
    <property type="resolution" value="1.90 A"/>
    <property type="chains" value="A/B=30-579"/>
</dbReference>
<dbReference type="PDB" id="3PPM">
    <property type="method" value="X-ray"/>
    <property type="resolution" value="1.78 A"/>
    <property type="chains" value="A/B=30-579"/>
</dbReference>
<dbReference type="PDB" id="3PR0">
    <property type="method" value="X-ray"/>
    <property type="resolution" value="2.20 A"/>
    <property type="chains" value="A/B=30-579"/>
</dbReference>
<dbReference type="PDB" id="3QJ8">
    <property type="method" value="X-ray"/>
    <property type="resolution" value="2.90 A"/>
    <property type="chains" value="A/B=32-579"/>
</dbReference>
<dbReference type="PDB" id="3QJ9">
    <property type="method" value="X-ray"/>
    <property type="resolution" value="2.30 A"/>
    <property type="chains" value="A/B=32-579"/>
</dbReference>
<dbReference type="PDB" id="3QK5">
    <property type="method" value="X-ray"/>
    <property type="resolution" value="2.20 A"/>
    <property type="chains" value="A/B=32-579"/>
</dbReference>
<dbReference type="PDB" id="3QKV">
    <property type="method" value="X-ray"/>
    <property type="resolution" value="3.10 A"/>
    <property type="chains" value="A/B=32-579"/>
</dbReference>
<dbReference type="PDB" id="4DO3">
    <property type="method" value="X-ray"/>
    <property type="resolution" value="2.25 A"/>
    <property type="chains" value="A/B=32-575"/>
</dbReference>
<dbReference type="PDB" id="4HBP">
    <property type="method" value="X-ray"/>
    <property type="resolution" value="2.91 A"/>
    <property type="chains" value="A/B=30-579"/>
</dbReference>
<dbReference type="PDB" id="4J5P">
    <property type="method" value="X-ray"/>
    <property type="resolution" value="2.30 A"/>
    <property type="chains" value="A/B=30-579"/>
</dbReference>
<dbReference type="PDB" id="6MRG">
    <property type="method" value="X-ray"/>
    <property type="resolution" value="2.77 A"/>
    <property type="chains" value="A/B/C/D=32-579"/>
</dbReference>
<dbReference type="PDBsum" id="1MT5"/>
<dbReference type="PDBsum" id="2VYA"/>
<dbReference type="PDBsum" id="2WAP"/>
<dbReference type="PDBsum" id="2WJ1"/>
<dbReference type="PDBsum" id="2WJ2"/>
<dbReference type="PDBsum" id="3K7F"/>
<dbReference type="PDBsum" id="3K83"/>
<dbReference type="PDBsum" id="3K84"/>
<dbReference type="PDBsum" id="3LJ6"/>
<dbReference type="PDBsum" id="3LJ7"/>
<dbReference type="PDBsum" id="3OJ8"/>
<dbReference type="PDBsum" id="3PPM"/>
<dbReference type="PDBsum" id="3PR0"/>
<dbReference type="PDBsum" id="3QJ8"/>
<dbReference type="PDBsum" id="3QJ9"/>
<dbReference type="PDBsum" id="3QK5"/>
<dbReference type="PDBsum" id="3QKV"/>
<dbReference type="PDBsum" id="4DO3"/>
<dbReference type="PDBsum" id="4HBP"/>
<dbReference type="PDBsum" id="4J5P"/>
<dbReference type="PDBsum" id="6MRG"/>
<dbReference type="SMR" id="P97612"/>
<dbReference type="DIP" id="DIP-46284N"/>
<dbReference type="FunCoup" id="P97612">
    <property type="interactions" value="213"/>
</dbReference>
<dbReference type="IntAct" id="P97612">
    <property type="interactions" value="1"/>
</dbReference>
<dbReference type="STRING" id="10116.ENSRNOP00000015667"/>
<dbReference type="BindingDB" id="P97612"/>
<dbReference type="ChEMBL" id="CHEMBL3229"/>
<dbReference type="DrugCentral" id="P97612"/>
<dbReference type="GuidetoPHARMACOLOGY" id="1400"/>
<dbReference type="SwissLipids" id="SLP:000001428"/>
<dbReference type="iPTMnet" id="P97612"/>
<dbReference type="PhosphoSitePlus" id="P97612"/>
<dbReference type="jPOST" id="P97612"/>
<dbReference type="PaxDb" id="10116-ENSRNOP00000015667"/>
<dbReference type="Ensembl" id="ENSRNOT00000015667.8">
    <property type="protein sequence ID" value="ENSRNOP00000015667.6"/>
    <property type="gene ID" value="ENSRNOG00000045949.3"/>
</dbReference>
<dbReference type="GeneID" id="100911581"/>
<dbReference type="UCSC" id="RGD:61808">
    <property type="organism name" value="rat"/>
</dbReference>
<dbReference type="AGR" id="RGD:61808"/>
<dbReference type="RGD" id="61808">
    <property type="gene designation" value="Faah"/>
</dbReference>
<dbReference type="eggNOG" id="KOG1212">
    <property type="taxonomic scope" value="Eukaryota"/>
</dbReference>
<dbReference type="GeneTree" id="ENSGT00940000161237"/>
<dbReference type="HOGENOM" id="CLU_009600_9_3_1"/>
<dbReference type="InParanoid" id="P97612"/>
<dbReference type="OMA" id="GMQPWKY"/>
<dbReference type="OrthoDB" id="6428749at2759"/>
<dbReference type="BRENDA" id="3.5.1.4">
    <property type="organism ID" value="5301"/>
</dbReference>
<dbReference type="BRENDA" id="3.5.1.99">
    <property type="organism ID" value="5301"/>
</dbReference>
<dbReference type="Reactome" id="R-RNO-2142753">
    <property type="pathway name" value="Arachidonate metabolism"/>
</dbReference>
<dbReference type="SABIO-RK" id="P97612"/>
<dbReference type="EvolutionaryTrace" id="P97612"/>
<dbReference type="PRO" id="PR:P97612"/>
<dbReference type="Proteomes" id="UP000002494">
    <property type="component" value="Chromosome 5"/>
</dbReference>
<dbReference type="Bgee" id="ENSRNOG00000011019">
    <property type="expression patterns" value="Expressed in jejunum and 13 other cell types or tissues"/>
</dbReference>
<dbReference type="GO" id="GO:0005789">
    <property type="term" value="C:endoplasmic reticulum membrane"/>
    <property type="evidence" value="ECO:0007669"/>
    <property type="project" value="UniProtKB-SubCell"/>
</dbReference>
<dbReference type="GO" id="GO:0098978">
    <property type="term" value="C:glutamatergic synapse"/>
    <property type="evidence" value="ECO:0000266"/>
    <property type="project" value="RGD"/>
</dbReference>
<dbReference type="GO" id="GO:0000139">
    <property type="term" value="C:Golgi membrane"/>
    <property type="evidence" value="ECO:0007669"/>
    <property type="project" value="UniProtKB-SubCell"/>
</dbReference>
<dbReference type="GO" id="GO:0031090">
    <property type="term" value="C:organelle membrane"/>
    <property type="evidence" value="ECO:0000314"/>
    <property type="project" value="UniProtKB"/>
</dbReference>
<dbReference type="GO" id="GO:0098794">
    <property type="term" value="C:postsynapse"/>
    <property type="evidence" value="ECO:0000314"/>
    <property type="project" value="SynGO"/>
</dbReference>
<dbReference type="GO" id="GO:0098793">
    <property type="term" value="C:presynapse"/>
    <property type="evidence" value="ECO:0000314"/>
    <property type="project" value="SynGO"/>
</dbReference>
<dbReference type="GO" id="GO:0004040">
    <property type="term" value="F:amidase activity"/>
    <property type="evidence" value="ECO:0000314"/>
    <property type="project" value="RGD"/>
</dbReference>
<dbReference type="GO" id="GO:0017064">
    <property type="term" value="F:fatty acid amide hydrolase activity"/>
    <property type="evidence" value="ECO:0000314"/>
    <property type="project" value="UniProtKB"/>
</dbReference>
<dbReference type="GO" id="GO:0016788">
    <property type="term" value="F:hydrolase activity, acting on ester bonds"/>
    <property type="evidence" value="ECO:0000314"/>
    <property type="project" value="RGD"/>
</dbReference>
<dbReference type="GO" id="GO:0042802">
    <property type="term" value="F:identical protein binding"/>
    <property type="evidence" value="ECO:0000315"/>
    <property type="project" value="RGD"/>
</dbReference>
<dbReference type="GO" id="GO:0008289">
    <property type="term" value="F:lipid binding"/>
    <property type="evidence" value="ECO:0000314"/>
    <property type="project" value="RGD"/>
</dbReference>
<dbReference type="GO" id="GO:0047372">
    <property type="term" value="F:monoacylglycerol lipase activity"/>
    <property type="evidence" value="ECO:0000314"/>
    <property type="project" value="UniProtKB"/>
</dbReference>
<dbReference type="GO" id="GO:0005543">
    <property type="term" value="F:phospholipid binding"/>
    <property type="evidence" value="ECO:0000315"/>
    <property type="project" value="RGD"/>
</dbReference>
<dbReference type="GO" id="GO:0009062">
    <property type="term" value="P:fatty acid catabolic process"/>
    <property type="evidence" value="ECO:0000314"/>
    <property type="project" value="UniProtKB"/>
</dbReference>
<dbReference type="GO" id="GO:0006631">
    <property type="term" value="P:fatty acid metabolic process"/>
    <property type="evidence" value="ECO:0000315"/>
    <property type="project" value="RGD"/>
</dbReference>
<dbReference type="GO" id="GO:0052651">
    <property type="term" value="P:monoacylglycerol catabolic process"/>
    <property type="evidence" value="ECO:0000314"/>
    <property type="project" value="UniProtKB"/>
</dbReference>
<dbReference type="GO" id="GO:0045907">
    <property type="term" value="P:positive regulation of vasoconstriction"/>
    <property type="evidence" value="ECO:0000315"/>
    <property type="project" value="RGD"/>
</dbReference>
<dbReference type="GO" id="GO:0150036">
    <property type="term" value="P:regulation of trans-synaptic signaling by endocannabinoid, modulating synaptic transmission"/>
    <property type="evidence" value="ECO:0000266"/>
    <property type="project" value="RGD"/>
</dbReference>
<dbReference type="FunFam" id="3.90.1300.10:FF:000001">
    <property type="entry name" value="Fatty-acid amide hydrolase 1"/>
    <property type="match status" value="1"/>
</dbReference>
<dbReference type="Gene3D" id="3.90.1300.10">
    <property type="entry name" value="Amidase signature (AS) domain"/>
    <property type="match status" value="1"/>
</dbReference>
<dbReference type="InterPro" id="IPR020556">
    <property type="entry name" value="Amidase_CS"/>
</dbReference>
<dbReference type="InterPro" id="IPR023631">
    <property type="entry name" value="Amidase_dom"/>
</dbReference>
<dbReference type="InterPro" id="IPR036928">
    <property type="entry name" value="AS_sf"/>
</dbReference>
<dbReference type="InterPro" id="IPR052096">
    <property type="entry name" value="Endocannabinoid_amidase"/>
</dbReference>
<dbReference type="PANTHER" id="PTHR45847">
    <property type="entry name" value="FATTY ACID AMIDE HYDROLASE"/>
    <property type="match status" value="1"/>
</dbReference>
<dbReference type="PANTHER" id="PTHR45847:SF3">
    <property type="entry name" value="FATTY-ACID AMIDE HYDROLASE 1"/>
    <property type="match status" value="1"/>
</dbReference>
<dbReference type="Pfam" id="PF01425">
    <property type="entry name" value="Amidase"/>
    <property type="match status" value="1"/>
</dbReference>
<dbReference type="PIRSF" id="PIRSF001221">
    <property type="entry name" value="Amidase_fungi"/>
    <property type="match status" value="1"/>
</dbReference>
<dbReference type="SUPFAM" id="SSF75304">
    <property type="entry name" value="Amidase signature (AS) enzymes"/>
    <property type="match status" value="1"/>
</dbReference>
<dbReference type="PROSITE" id="PS00571">
    <property type="entry name" value="AMIDASES"/>
    <property type="match status" value="1"/>
</dbReference>
<name>FAAH1_RAT</name>
<keyword id="KW-0002">3D-structure</keyword>
<keyword id="KW-0903">Direct protein sequencing</keyword>
<keyword id="KW-0256">Endoplasmic reticulum</keyword>
<keyword id="KW-0333">Golgi apparatus</keyword>
<keyword id="KW-0378">Hydrolase</keyword>
<keyword id="KW-0442">Lipid degradation</keyword>
<keyword id="KW-0443">Lipid metabolism</keyword>
<keyword id="KW-0472">Membrane</keyword>
<keyword id="KW-0597">Phosphoprotein</keyword>
<keyword id="KW-1185">Reference proteome</keyword>
<keyword id="KW-0812">Transmembrane</keyword>
<keyword id="KW-1133">Transmembrane helix</keyword>
<protein>
    <recommendedName>
        <fullName>Fatty-acid amide hydrolase 1</fullName>
        <ecNumber evidence="4 5 9 11 12 14">3.5.1.99</ecNumber>
    </recommendedName>
    <alternativeName>
        <fullName>Anandamide amidase</fullName>
    </alternativeName>
    <alternativeName>
        <fullName>Anandamide amidohydrolase 1</fullName>
    </alternativeName>
    <alternativeName>
        <fullName>Fatty acid ester hydrolase</fullName>
        <ecNumber evidence="4 8 9">3.1.1.-</ecNumber>
    </alternativeName>
    <alternativeName>
        <fullName>Oleamide hydrolase 1</fullName>
    </alternativeName>
</protein>
<gene>
    <name type="primary">Faah</name>
    <name type="synonym">Faah1</name>
</gene>